<keyword id="KW-0143">Chaperone</keyword>
<keyword id="KW-0496">Mitochondrion</keyword>
<keyword id="KW-1185">Reference proteome</keyword>
<protein>
    <recommendedName>
        <fullName>Complex III assembly factor LYRM7</fullName>
    </recommendedName>
    <alternativeName>
        <fullName>LYR motif-containing protein 7</fullName>
    </alternativeName>
</protein>
<gene>
    <name type="primary">lyrm7</name>
    <name type="synonym">MZM1L</name>
</gene>
<comment type="function">
    <text evidence="1">Assembly factor required for Rieske Fe-S protein UQCRFS1 incorporation into the cytochrome b-c1 (CIII) complex. Functions as a chaperone, binding to this subunit within the mitochondrial matrix and stabilizing it prior to its translocation and insertion into the late CIII dimeric intermediate within the mitochondrial inner membrane (By similarity).</text>
</comment>
<comment type="subunit">
    <text evidence="1">Interacts with UQCRFS1.</text>
</comment>
<comment type="subcellular location">
    <subcellularLocation>
        <location evidence="1">Mitochondrion matrix</location>
    </subcellularLocation>
</comment>
<comment type="similarity">
    <text evidence="3">Belongs to the complex I LYR family.</text>
</comment>
<dbReference type="EMBL" id="AF310893">
    <property type="protein sequence ID" value="AAG45129.1"/>
    <property type="molecule type" value="Genomic_DNA"/>
</dbReference>
<dbReference type="EMBL" id="AAFI02000005">
    <property type="protein sequence ID" value="EAL71959.1"/>
    <property type="molecule type" value="Genomic_DNA"/>
</dbReference>
<dbReference type="RefSeq" id="XP_646347.1">
    <property type="nucleotide sequence ID" value="XM_641255.1"/>
</dbReference>
<dbReference type="SMR" id="Q9GPS1"/>
<dbReference type="FunCoup" id="Q9GPS1">
    <property type="interactions" value="3"/>
</dbReference>
<dbReference type="STRING" id="44689.Q9GPS1"/>
<dbReference type="PaxDb" id="44689-DDB0191315"/>
<dbReference type="EnsemblProtists" id="EAL71959">
    <property type="protein sequence ID" value="EAL71959"/>
    <property type="gene ID" value="DDB_G0269218"/>
</dbReference>
<dbReference type="GeneID" id="8617302"/>
<dbReference type="KEGG" id="ddi:DDB_G0269218"/>
<dbReference type="dictyBase" id="DDB_G0269218">
    <property type="gene designation" value="lyrm7"/>
</dbReference>
<dbReference type="VEuPathDB" id="AmoebaDB:DDB_G0269218"/>
<dbReference type="HOGENOM" id="CLU_1838905_0_0_1"/>
<dbReference type="InParanoid" id="Q9GPS1"/>
<dbReference type="OMA" id="QQYRENQ"/>
<dbReference type="PhylomeDB" id="Q9GPS1"/>
<dbReference type="Reactome" id="R-DDI-9865881">
    <property type="pathway name" value="Complex III assembly"/>
</dbReference>
<dbReference type="PRO" id="PR:Q9GPS1"/>
<dbReference type="Proteomes" id="UP000002195">
    <property type="component" value="Chromosome 1"/>
</dbReference>
<dbReference type="GO" id="GO:0005759">
    <property type="term" value="C:mitochondrial matrix"/>
    <property type="evidence" value="ECO:0000318"/>
    <property type="project" value="GO_Central"/>
</dbReference>
<dbReference type="GO" id="GO:0044183">
    <property type="term" value="F:protein folding chaperone"/>
    <property type="evidence" value="ECO:0000318"/>
    <property type="project" value="GO_Central"/>
</dbReference>
<dbReference type="GO" id="GO:0034551">
    <property type="term" value="P:mitochondrial respiratory chain complex III assembly"/>
    <property type="evidence" value="ECO:0000318"/>
    <property type="project" value="GO_Central"/>
</dbReference>
<dbReference type="CDD" id="cd20267">
    <property type="entry name" value="Complex1_LYR_LYRM7"/>
    <property type="match status" value="1"/>
</dbReference>
<dbReference type="InterPro" id="IPR008011">
    <property type="entry name" value="Complex1_LYR_dom"/>
</dbReference>
<dbReference type="InterPro" id="IPR045298">
    <property type="entry name" value="Complex1_LYR_LYRM7"/>
</dbReference>
<dbReference type="InterPro" id="IPR050435">
    <property type="entry name" value="MZM1/LYRM7"/>
</dbReference>
<dbReference type="PANTHER" id="PTHR46749">
    <property type="entry name" value="COMPLEX III ASSEMBLY FACTOR LYRM7"/>
    <property type="match status" value="1"/>
</dbReference>
<dbReference type="PANTHER" id="PTHR46749:SF1">
    <property type="entry name" value="COMPLEX III ASSEMBLY FACTOR LYRM7"/>
    <property type="match status" value="1"/>
</dbReference>
<dbReference type="Pfam" id="PF05347">
    <property type="entry name" value="Complex1_LYR"/>
    <property type="match status" value="1"/>
</dbReference>
<feature type="chain" id="PRO_0000327857" description="Complex III assembly factor LYRM7">
    <location>
        <begin position="1"/>
        <end position="140"/>
    </location>
</feature>
<feature type="region of interest" description="Disordered" evidence="2">
    <location>
        <begin position="93"/>
        <end position="140"/>
    </location>
</feature>
<feature type="compositionally biased region" description="Polar residues" evidence="2">
    <location>
        <begin position="130"/>
        <end position="140"/>
    </location>
</feature>
<proteinExistence type="inferred from homology"/>
<organism>
    <name type="scientific">Dictyostelium discoideum</name>
    <name type="common">Social amoeba</name>
    <dbReference type="NCBI Taxonomy" id="44689"/>
    <lineage>
        <taxon>Eukaryota</taxon>
        <taxon>Amoebozoa</taxon>
        <taxon>Evosea</taxon>
        <taxon>Eumycetozoa</taxon>
        <taxon>Dictyostelia</taxon>
        <taxon>Dictyosteliales</taxon>
        <taxon>Dictyosteliaceae</taxon>
        <taxon>Dictyostelium</taxon>
    </lineage>
</organism>
<sequence>MNRAKVLSSYLGLLRTEKKVFQNDKRALEHVINLTRVQFRDNKNETDNTKINEMIDHANAVSHFLVKDLIQGVRKDEKTIQLKFDENTKSYQQYEFVNDQPPQRKKRGKIQIDDEQPTTCCGGGCGKPMPSNNSEKSTCS</sequence>
<name>LYRM7_DICDI</name>
<reference key="1">
    <citation type="journal article" date="2001" name="Nucleic Acids Res.">
        <title>The Dictyostelium discoideum family of Rho-related proteins.</title>
        <authorList>
            <person name="Rivero F."/>
            <person name="Dislich H."/>
            <person name="Gloeckner G."/>
            <person name="Noegel A.A."/>
        </authorList>
    </citation>
    <scope>NUCLEOTIDE SEQUENCE [GENOMIC DNA]</scope>
    <source>
        <strain>AX4</strain>
    </source>
</reference>
<reference key="2">
    <citation type="journal article" date="2005" name="Nature">
        <title>The genome of the social amoeba Dictyostelium discoideum.</title>
        <authorList>
            <person name="Eichinger L."/>
            <person name="Pachebat J.A."/>
            <person name="Gloeckner G."/>
            <person name="Rajandream M.A."/>
            <person name="Sucgang R."/>
            <person name="Berriman M."/>
            <person name="Song J."/>
            <person name="Olsen R."/>
            <person name="Szafranski K."/>
            <person name="Xu Q."/>
            <person name="Tunggal B."/>
            <person name="Kummerfeld S."/>
            <person name="Madera M."/>
            <person name="Konfortov B.A."/>
            <person name="Rivero F."/>
            <person name="Bankier A.T."/>
            <person name="Lehmann R."/>
            <person name="Hamlin N."/>
            <person name="Davies R."/>
            <person name="Gaudet P."/>
            <person name="Fey P."/>
            <person name="Pilcher K."/>
            <person name="Chen G."/>
            <person name="Saunders D."/>
            <person name="Sodergren E.J."/>
            <person name="Davis P."/>
            <person name="Kerhornou A."/>
            <person name="Nie X."/>
            <person name="Hall N."/>
            <person name="Anjard C."/>
            <person name="Hemphill L."/>
            <person name="Bason N."/>
            <person name="Farbrother P."/>
            <person name="Desany B."/>
            <person name="Just E."/>
            <person name="Morio T."/>
            <person name="Rost R."/>
            <person name="Churcher C.M."/>
            <person name="Cooper J."/>
            <person name="Haydock S."/>
            <person name="van Driessche N."/>
            <person name="Cronin A."/>
            <person name="Goodhead I."/>
            <person name="Muzny D.M."/>
            <person name="Mourier T."/>
            <person name="Pain A."/>
            <person name="Lu M."/>
            <person name="Harper D."/>
            <person name="Lindsay R."/>
            <person name="Hauser H."/>
            <person name="James K.D."/>
            <person name="Quiles M."/>
            <person name="Madan Babu M."/>
            <person name="Saito T."/>
            <person name="Buchrieser C."/>
            <person name="Wardroper A."/>
            <person name="Felder M."/>
            <person name="Thangavelu M."/>
            <person name="Johnson D."/>
            <person name="Knights A."/>
            <person name="Loulseged H."/>
            <person name="Mungall K.L."/>
            <person name="Oliver K."/>
            <person name="Price C."/>
            <person name="Quail M.A."/>
            <person name="Urushihara H."/>
            <person name="Hernandez J."/>
            <person name="Rabbinowitsch E."/>
            <person name="Steffen D."/>
            <person name="Sanders M."/>
            <person name="Ma J."/>
            <person name="Kohara Y."/>
            <person name="Sharp S."/>
            <person name="Simmonds M.N."/>
            <person name="Spiegler S."/>
            <person name="Tivey A."/>
            <person name="Sugano S."/>
            <person name="White B."/>
            <person name="Walker D."/>
            <person name="Woodward J.R."/>
            <person name="Winckler T."/>
            <person name="Tanaka Y."/>
            <person name="Shaulsky G."/>
            <person name="Schleicher M."/>
            <person name="Weinstock G.M."/>
            <person name="Rosenthal A."/>
            <person name="Cox E.C."/>
            <person name="Chisholm R.L."/>
            <person name="Gibbs R.A."/>
            <person name="Loomis W.F."/>
            <person name="Platzer M."/>
            <person name="Kay R.R."/>
            <person name="Williams J.G."/>
            <person name="Dear P.H."/>
            <person name="Noegel A.A."/>
            <person name="Barrell B.G."/>
            <person name="Kuspa A."/>
        </authorList>
    </citation>
    <scope>NUCLEOTIDE SEQUENCE [LARGE SCALE GENOMIC DNA]</scope>
    <source>
        <strain>AX4</strain>
    </source>
</reference>
<accession>Q9GPS1</accession>
<accession>Q55CY4</accession>
<evidence type="ECO:0000250" key="1"/>
<evidence type="ECO:0000256" key="2">
    <source>
        <dbReference type="SAM" id="MobiDB-lite"/>
    </source>
</evidence>
<evidence type="ECO:0000305" key="3"/>